<evidence type="ECO:0000255" key="1">
    <source>
        <dbReference type="HAMAP-Rule" id="MF_00760"/>
    </source>
</evidence>
<organism>
    <name type="scientific">Listeria monocytogenes serotype 4b (strain F2365)</name>
    <dbReference type="NCBI Taxonomy" id="265669"/>
    <lineage>
        <taxon>Bacteria</taxon>
        <taxon>Bacillati</taxon>
        <taxon>Bacillota</taxon>
        <taxon>Bacilli</taxon>
        <taxon>Bacillales</taxon>
        <taxon>Listeriaceae</taxon>
        <taxon>Listeria</taxon>
    </lineage>
</organism>
<accession>Q71Y94</accession>
<feature type="chain" id="PRO_0000216101" description="UPF0302 protein LMOf2365_1950">
    <location>
        <begin position="1"/>
        <end position="181"/>
    </location>
</feature>
<reference key="1">
    <citation type="journal article" date="2004" name="Nucleic Acids Res.">
        <title>Whole genome comparisons of serotype 4b and 1/2a strains of the food-borne pathogen Listeria monocytogenes reveal new insights into the core genome components of this species.</title>
        <authorList>
            <person name="Nelson K.E."/>
            <person name="Fouts D.E."/>
            <person name="Mongodin E.F."/>
            <person name="Ravel J."/>
            <person name="DeBoy R.T."/>
            <person name="Kolonay J.F."/>
            <person name="Rasko D.A."/>
            <person name="Angiuoli S.V."/>
            <person name="Gill S.R."/>
            <person name="Paulsen I.T."/>
            <person name="Peterson J.D."/>
            <person name="White O."/>
            <person name="Nelson W.C."/>
            <person name="Nierman W.C."/>
            <person name="Beanan M.J."/>
            <person name="Brinkac L.M."/>
            <person name="Daugherty S.C."/>
            <person name="Dodson R.J."/>
            <person name="Durkin A.S."/>
            <person name="Madupu R."/>
            <person name="Haft D.H."/>
            <person name="Selengut J."/>
            <person name="Van Aken S.E."/>
            <person name="Khouri H.M."/>
            <person name="Fedorova N."/>
            <person name="Forberger H.A."/>
            <person name="Tran B."/>
            <person name="Kathariou S."/>
            <person name="Wonderling L.D."/>
            <person name="Uhlich G.A."/>
            <person name="Bayles D.O."/>
            <person name="Luchansky J.B."/>
            <person name="Fraser C.M."/>
        </authorList>
    </citation>
    <scope>NUCLEOTIDE SEQUENCE [LARGE SCALE GENOMIC DNA]</scope>
    <source>
        <strain>F2365</strain>
    </source>
</reference>
<name>Y1950_LISMF</name>
<dbReference type="EMBL" id="AE017262">
    <property type="protein sequence ID" value="AAT04720.1"/>
    <property type="molecule type" value="Genomic_DNA"/>
</dbReference>
<dbReference type="SMR" id="Q71Y94"/>
<dbReference type="KEGG" id="lmf:LMOf2365_1950"/>
<dbReference type="HOGENOM" id="CLU_126019_0_0_9"/>
<dbReference type="Gene3D" id="3.40.1530.30">
    <property type="entry name" value="Uncharacterised family UPF0302, N-terminal domain"/>
    <property type="match status" value="1"/>
</dbReference>
<dbReference type="Gene3D" id="4.10.810.10">
    <property type="entry name" value="Virus Scaffolding Protein, Chain A"/>
    <property type="match status" value="1"/>
</dbReference>
<dbReference type="HAMAP" id="MF_00760">
    <property type="entry name" value="UPF0302"/>
    <property type="match status" value="1"/>
</dbReference>
<dbReference type="InterPro" id="IPR014957">
    <property type="entry name" value="IDEAL_dom"/>
</dbReference>
<dbReference type="InterPro" id="IPR011188">
    <property type="entry name" value="UPF0302"/>
</dbReference>
<dbReference type="InterPro" id="IPR014963">
    <property type="entry name" value="UPF0302_N"/>
</dbReference>
<dbReference type="InterPro" id="IPR038091">
    <property type="entry name" value="UPF0302_N_sf"/>
</dbReference>
<dbReference type="InterPro" id="IPR027393">
    <property type="entry name" value="Virus_scaffolding_prot_C"/>
</dbReference>
<dbReference type="NCBIfam" id="NF002965">
    <property type="entry name" value="PRK03636.1"/>
    <property type="match status" value="1"/>
</dbReference>
<dbReference type="Pfam" id="PF08858">
    <property type="entry name" value="IDEAL"/>
    <property type="match status" value="1"/>
</dbReference>
<dbReference type="Pfam" id="PF08864">
    <property type="entry name" value="UPF0302"/>
    <property type="match status" value="1"/>
</dbReference>
<dbReference type="PIRSF" id="PIRSF007165">
    <property type="entry name" value="UCP007165"/>
    <property type="match status" value="1"/>
</dbReference>
<dbReference type="SMART" id="SM00914">
    <property type="entry name" value="IDEAL"/>
    <property type="match status" value="1"/>
</dbReference>
<comment type="similarity">
    <text evidence="1">Belongs to the UPF0302 family.</text>
</comment>
<proteinExistence type="inferred from homology"/>
<gene>
    <name type="ordered locus">LMOf2365_1950</name>
</gene>
<protein>
    <recommendedName>
        <fullName evidence="1">UPF0302 protein LMOf2365_1950</fullName>
    </recommendedName>
</protein>
<sequence length="181" mass="21241">MKASISIDEKKDFIRWFLNKHQMKTREAMWVLNYIAGHDQIVKYVHFVDNLEGCARGLSLSAHGVESEPFLFFKGNIMTTDPEKAFHDIRLNWDEELYVELHFEEAMSSPEYALVREDNPFTAVKLADEEKEMADALIYQSVHQFSREKVLQQIDEALDTRDEAAFHKLVRILQQMDTEKE</sequence>